<accession>A8MV24</accession>
<gene>
    <name evidence="1" type="primary">SPMAP1</name>
    <name type="synonym">C17orf98</name>
</gene>
<evidence type="ECO:0000312" key="1">
    <source>
        <dbReference type="HGNC" id="HGNC:34492"/>
    </source>
</evidence>
<keyword id="KW-1267">Proteomics identification</keyword>
<keyword id="KW-1185">Reference proteome</keyword>
<proteinExistence type="evidence at protein level"/>
<protein>
    <recommendedName>
        <fullName evidence="1">Sperm microtubule associated protein 1</fullName>
    </recommendedName>
</protein>
<sequence length="154" mass="17565">MAYLSECRLRLEKGFILDGVAVSTAARAYGRSRPKLWSAIPPYNAQQDYHARSYFQSHVVPPLLRKTDQDHGGTGRDGWIVDYIHIFGQGQRYLNRRNWAGTGHSLQQVTGHDHYNADLKPIDGFNGRFGYRRNTPALRQSTSVFGEVTHFPLF</sequence>
<reference key="1">
    <citation type="journal article" date="2006" name="Nature">
        <title>DNA sequence of human chromosome 17 and analysis of rearrangement in the human lineage.</title>
        <authorList>
            <person name="Zody M.C."/>
            <person name="Garber M."/>
            <person name="Adams D.J."/>
            <person name="Sharpe T."/>
            <person name="Harrow J."/>
            <person name="Lupski J.R."/>
            <person name="Nicholson C."/>
            <person name="Searle S.M."/>
            <person name="Wilming L."/>
            <person name="Young S.K."/>
            <person name="Abouelleil A."/>
            <person name="Allen N.R."/>
            <person name="Bi W."/>
            <person name="Bloom T."/>
            <person name="Borowsky M.L."/>
            <person name="Bugalter B.E."/>
            <person name="Butler J."/>
            <person name="Chang J.L."/>
            <person name="Chen C.-K."/>
            <person name="Cook A."/>
            <person name="Corum B."/>
            <person name="Cuomo C.A."/>
            <person name="de Jong P.J."/>
            <person name="DeCaprio D."/>
            <person name="Dewar K."/>
            <person name="FitzGerald M."/>
            <person name="Gilbert J."/>
            <person name="Gibson R."/>
            <person name="Gnerre S."/>
            <person name="Goldstein S."/>
            <person name="Grafham D.V."/>
            <person name="Grocock R."/>
            <person name="Hafez N."/>
            <person name="Hagopian D.S."/>
            <person name="Hart E."/>
            <person name="Norman C.H."/>
            <person name="Humphray S."/>
            <person name="Jaffe D.B."/>
            <person name="Jones M."/>
            <person name="Kamal M."/>
            <person name="Khodiyar V.K."/>
            <person name="LaButti K."/>
            <person name="Laird G."/>
            <person name="Lehoczky J."/>
            <person name="Liu X."/>
            <person name="Lokyitsang T."/>
            <person name="Loveland J."/>
            <person name="Lui A."/>
            <person name="Macdonald P."/>
            <person name="Major J.E."/>
            <person name="Matthews L."/>
            <person name="Mauceli E."/>
            <person name="McCarroll S.A."/>
            <person name="Mihalev A.H."/>
            <person name="Mudge J."/>
            <person name="Nguyen C."/>
            <person name="Nicol R."/>
            <person name="O'Leary S.B."/>
            <person name="Osoegawa K."/>
            <person name="Schwartz D.C."/>
            <person name="Shaw-Smith C."/>
            <person name="Stankiewicz P."/>
            <person name="Steward C."/>
            <person name="Swarbreck D."/>
            <person name="Venkataraman V."/>
            <person name="Whittaker C.A."/>
            <person name="Yang X."/>
            <person name="Zimmer A.R."/>
            <person name="Bradley A."/>
            <person name="Hubbard T."/>
            <person name="Birren B.W."/>
            <person name="Rogers J."/>
            <person name="Lander E.S."/>
            <person name="Nusbaum C."/>
        </authorList>
    </citation>
    <scope>NUCLEOTIDE SEQUENCE [LARGE SCALE GENOMIC DNA]</scope>
</reference>
<reference key="2">
    <citation type="submission" date="2005-07" db="EMBL/GenBank/DDBJ databases">
        <authorList>
            <person name="Mural R.J."/>
            <person name="Istrail S."/>
            <person name="Sutton G.G."/>
            <person name="Florea L."/>
            <person name="Halpern A.L."/>
            <person name="Mobarry C.M."/>
            <person name="Lippert R."/>
            <person name="Walenz B."/>
            <person name="Shatkay H."/>
            <person name="Dew I."/>
            <person name="Miller J.R."/>
            <person name="Flanigan M.J."/>
            <person name="Edwards N.J."/>
            <person name="Bolanos R."/>
            <person name="Fasulo D."/>
            <person name="Halldorsson B.V."/>
            <person name="Hannenhalli S."/>
            <person name="Turner R."/>
            <person name="Yooseph S."/>
            <person name="Lu F."/>
            <person name="Nusskern D.R."/>
            <person name="Shue B.C."/>
            <person name="Zheng X.H."/>
            <person name="Zhong F."/>
            <person name="Delcher A.L."/>
            <person name="Huson D.H."/>
            <person name="Kravitz S.A."/>
            <person name="Mouchard L."/>
            <person name="Reinert K."/>
            <person name="Remington K.A."/>
            <person name="Clark A.G."/>
            <person name="Waterman M.S."/>
            <person name="Eichler E.E."/>
            <person name="Adams M.D."/>
            <person name="Hunkapiller M.W."/>
            <person name="Myers E.W."/>
            <person name="Venter J.C."/>
        </authorList>
    </citation>
    <scope>NUCLEOTIDE SEQUENCE [LARGE SCALE GENOMIC DNA]</scope>
</reference>
<organism>
    <name type="scientific">Homo sapiens</name>
    <name type="common">Human</name>
    <dbReference type="NCBI Taxonomy" id="9606"/>
    <lineage>
        <taxon>Eukaryota</taxon>
        <taxon>Metazoa</taxon>
        <taxon>Chordata</taxon>
        <taxon>Craniata</taxon>
        <taxon>Vertebrata</taxon>
        <taxon>Euteleostomi</taxon>
        <taxon>Mammalia</taxon>
        <taxon>Eutheria</taxon>
        <taxon>Euarchontoglires</taxon>
        <taxon>Primates</taxon>
        <taxon>Haplorrhini</taxon>
        <taxon>Catarrhini</taxon>
        <taxon>Hominidae</taxon>
        <taxon>Homo</taxon>
    </lineage>
</organism>
<name>SPMA1_HUMAN</name>
<dbReference type="EMBL" id="AC006449">
    <property type="status" value="NOT_ANNOTATED_CDS"/>
    <property type="molecule type" value="Genomic_DNA"/>
</dbReference>
<dbReference type="EMBL" id="CH471152">
    <property type="protein sequence ID" value="EAW60538.1"/>
    <property type="molecule type" value="Genomic_DNA"/>
</dbReference>
<dbReference type="CCDS" id="CCDS42310.1"/>
<dbReference type="RefSeq" id="NP_001073934.1">
    <property type="nucleotide sequence ID" value="NM_001080465.3"/>
</dbReference>
<dbReference type="SMR" id="A8MV24"/>
<dbReference type="BioGRID" id="132666">
    <property type="interactions" value="1"/>
</dbReference>
<dbReference type="STRING" id="9606.ENSP00000479396"/>
<dbReference type="BioMuta" id="C17orf98"/>
<dbReference type="MassIVE" id="A8MV24"/>
<dbReference type="PaxDb" id="9606-ENSP00000479396"/>
<dbReference type="PeptideAtlas" id="A8MV24"/>
<dbReference type="ProteomicsDB" id="2145"/>
<dbReference type="Antibodypedia" id="76316">
    <property type="antibodies" value="6 antibodies from 6 providers"/>
</dbReference>
<dbReference type="DNASU" id="388381"/>
<dbReference type="Ensembl" id="ENST00000614158.2">
    <property type="protein sequence ID" value="ENSP00000479396.1"/>
    <property type="gene ID" value="ENSG00000275489.2"/>
</dbReference>
<dbReference type="Ensembl" id="ENST00000619585.2">
    <property type="protein sequence ID" value="ENSP00000482299.1"/>
    <property type="gene ID" value="ENSG00000276913.2"/>
</dbReference>
<dbReference type="GeneID" id="388381"/>
<dbReference type="KEGG" id="hsa:388381"/>
<dbReference type="MANE-Select" id="ENST00000614158.2">
    <property type="protein sequence ID" value="ENSP00000479396.1"/>
    <property type="RefSeq nucleotide sequence ID" value="NM_001080465.3"/>
    <property type="RefSeq protein sequence ID" value="NP_001073934.1"/>
</dbReference>
<dbReference type="UCSC" id="uc002hqv.3">
    <property type="organism name" value="human"/>
</dbReference>
<dbReference type="AGR" id="HGNC:34492"/>
<dbReference type="CTD" id="388381"/>
<dbReference type="GeneCards" id="SPMAP1"/>
<dbReference type="HGNC" id="HGNC:34492">
    <property type="gene designation" value="SPMAP1"/>
</dbReference>
<dbReference type="HPA" id="ENSG00000275489">
    <property type="expression patterns" value="Tissue enriched (testis)"/>
</dbReference>
<dbReference type="neXtProt" id="NX_A8MV24"/>
<dbReference type="OpenTargets" id="ENSG00000275489"/>
<dbReference type="PharmGKB" id="PA162378591"/>
<dbReference type="VEuPathDB" id="HostDB:ENSG00000275489"/>
<dbReference type="eggNOG" id="ENOG502S1V2">
    <property type="taxonomic scope" value="Eukaryota"/>
</dbReference>
<dbReference type="GeneTree" id="ENSGT00390000004450"/>
<dbReference type="HOGENOM" id="CLU_120758_0_0_1"/>
<dbReference type="InParanoid" id="A8MV24"/>
<dbReference type="OMA" id="QKEFILD"/>
<dbReference type="OrthoDB" id="9935043at2759"/>
<dbReference type="PAN-GO" id="A8MV24">
    <property type="GO annotations" value="0 GO annotations based on evolutionary models"/>
</dbReference>
<dbReference type="PhylomeDB" id="A8MV24"/>
<dbReference type="TreeFam" id="TF338072"/>
<dbReference type="PathwayCommons" id="A8MV24"/>
<dbReference type="BioGRID-ORCS" id="388381">
    <property type="hits" value="14 hits in 1106 CRISPR screens"/>
</dbReference>
<dbReference type="GenomeRNAi" id="388381"/>
<dbReference type="Pharos" id="A8MV24">
    <property type="development level" value="Tdark"/>
</dbReference>
<dbReference type="PRO" id="PR:A8MV24"/>
<dbReference type="Proteomes" id="UP000005640">
    <property type="component" value="Chromosome 17"/>
</dbReference>
<dbReference type="RNAct" id="A8MV24">
    <property type="molecule type" value="protein"/>
</dbReference>
<dbReference type="Bgee" id="ENSG00000275489">
    <property type="expression patterns" value="Expressed in male germ line stem cell (sensu Vertebrata) in testis and 55 other cell types or tissues"/>
</dbReference>
<dbReference type="InterPro" id="IPR028027">
    <property type="entry name" value="SPMAP1"/>
</dbReference>
<dbReference type="PANTHER" id="PTHR34221">
    <property type="entry name" value="HYPOTHETICAL PROTEIN LOC691189"/>
    <property type="match status" value="1"/>
</dbReference>
<dbReference type="PANTHER" id="PTHR34221:SF2">
    <property type="entry name" value="RIKEN CDNA 1700001P01 GENE"/>
    <property type="match status" value="1"/>
</dbReference>
<dbReference type="Pfam" id="PF15075">
    <property type="entry name" value="SPMAP1-like"/>
    <property type="match status" value="1"/>
</dbReference>
<feature type="chain" id="PRO_0000340710" description="Sperm microtubule associated protein 1">
    <location>
        <begin position="1"/>
        <end position="154"/>
    </location>
</feature>
<feature type="sequence variant" id="VAR_044022" description="In dbSNP:rs7210156.">
    <original>P</original>
    <variation>L</variation>
    <location>
        <position position="61"/>
    </location>
</feature>